<accession>A1VZB3</accession>
<gene>
    <name evidence="1" type="primary">hisS</name>
    <name type="ordered locus">CJJ81176_0786</name>
</gene>
<comment type="catalytic activity">
    <reaction evidence="1">
        <text>tRNA(His) + L-histidine + ATP = L-histidyl-tRNA(His) + AMP + diphosphate + H(+)</text>
        <dbReference type="Rhea" id="RHEA:17313"/>
        <dbReference type="Rhea" id="RHEA-COMP:9665"/>
        <dbReference type="Rhea" id="RHEA-COMP:9689"/>
        <dbReference type="ChEBI" id="CHEBI:15378"/>
        <dbReference type="ChEBI" id="CHEBI:30616"/>
        <dbReference type="ChEBI" id="CHEBI:33019"/>
        <dbReference type="ChEBI" id="CHEBI:57595"/>
        <dbReference type="ChEBI" id="CHEBI:78442"/>
        <dbReference type="ChEBI" id="CHEBI:78527"/>
        <dbReference type="ChEBI" id="CHEBI:456215"/>
        <dbReference type="EC" id="6.1.1.21"/>
    </reaction>
</comment>
<comment type="subunit">
    <text evidence="1">Homodimer.</text>
</comment>
<comment type="subcellular location">
    <subcellularLocation>
        <location evidence="1">Cytoplasm</location>
    </subcellularLocation>
</comment>
<comment type="similarity">
    <text evidence="1">Belongs to the class-II aminoacyl-tRNA synthetase family.</text>
</comment>
<proteinExistence type="inferred from homology"/>
<feature type="chain" id="PRO_1000016337" description="Histidine--tRNA ligase">
    <location>
        <begin position="1"/>
        <end position="408"/>
    </location>
</feature>
<name>SYH_CAMJJ</name>
<organism>
    <name type="scientific">Campylobacter jejuni subsp. jejuni serotype O:23/36 (strain 81-176)</name>
    <dbReference type="NCBI Taxonomy" id="354242"/>
    <lineage>
        <taxon>Bacteria</taxon>
        <taxon>Pseudomonadati</taxon>
        <taxon>Campylobacterota</taxon>
        <taxon>Epsilonproteobacteria</taxon>
        <taxon>Campylobacterales</taxon>
        <taxon>Campylobacteraceae</taxon>
        <taxon>Campylobacter</taxon>
    </lineage>
</organism>
<keyword id="KW-0030">Aminoacyl-tRNA synthetase</keyword>
<keyword id="KW-0067">ATP-binding</keyword>
<keyword id="KW-0963">Cytoplasm</keyword>
<keyword id="KW-0436">Ligase</keyword>
<keyword id="KW-0547">Nucleotide-binding</keyword>
<keyword id="KW-0648">Protein biosynthesis</keyword>
<reference key="1">
    <citation type="submission" date="2006-12" db="EMBL/GenBank/DDBJ databases">
        <authorList>
            <person name="Fouts D.E."/>
            <person name="Nelson K.E."/>
            <person name="Sebastian Y."/>
        </authorList>
    </citation>
    <scope>NUCLEOTIDE SEQUENCE [LARGE SCALE GENOMIC DNA]</scope>
    <source>
        <strain>81-176</strain>
    </source>
</reference>
<sequence>MINALKGMKDLLDKDAYCYEKVIKTCEEVAKNYGFTFINTPHLELCTLFKRSVGESSDIVGKEMYEFIDKGENHVCMRPEGTAGVVRAYIEKKLDKNTSVKRWFYHGSMFRYERPQKGRLREFHQFGVESFGNASVYEDASIILMLVEIFSRLDIKFKLLINSLGCLKCMPKYRENLIHFLDSKEGFCEDCLRRKNLNPIRVLDCKNEHCQSLLNDAPLLNQNLCSSCQKDFEILQSVLKENGVDFEVDSKLVRGLDYYSKTAFEFISDEIGAKAAIAGGGRYDRLIEYLDGKSGFGVGFAMGIERIIAILEQKEEKVQREGIYLCAMDEIYIQKLLHIATNLRKEHKVLLSYEARKLAKHLENADKNNAEIFLCMGENEAQNESLFYKNLAKKEEKMIKISDLKKVL</sequence>
<evidence type="ECO:0000255" key="1">
    <source>
        <dbReference type="HAMAP-Rule" id="MF_00127"/>
    </source>
</evidence>
<protein>
    <recommendedName>
        <fullName evidence="1">Histidine--tRNA ligase</fullName>
        <ecNumber evidence="1">6.1.1.21</ecNumber>
    </recommendedName>
    <alternativeName>
        <fullName evidence="1">Histidyl-tRNA synthetase</fullName>
        <shortName evidence="1">HisRS</shortName>
    </alternativeName>
</protein>
<dbReference type="EC" id="6.1.1.21" evidence="1"/>
<dbReference type="EMBL" id="CP000538">
    <property type="protein sequence ID" value="EAQ72459.1"/>
    <property type="molecule type" value="Genomic_DNA"/>
</dbReference>
<dbReference type="RefSeq" id="WP_002856972.1">
    <property type="nucleotide sequence ID" value="NC_008787.1"/>
</dbReference>
<dbReference type="SMR" id="A1VZB3"/>
<dbReference type="KEGG" id="cjj:CJJ81176_0786"/>
<dbReference type="eggNOG" id="COG0124">
    <property type="taxonomic scope" value="Bacteria"/>
</dbReference>
<dbReference type="HOGENOM" id="CLU_025113_1_1_7"/>
<dbReference type="Proteomes" id="UP000000646">
    <property type="component" value="Chromosome"/>
</dbReference>
<dbReference type="GO" id="GO:0005737">
    <property type="term" value="C:cytoplasm"/>
    <property type="evidence" value="ECO:0007669"/>
    <property type="project" value="UniProtKB-SubCell"/>
</dbReference>
<dbReference type="GO" id="GO:0005524">
    <property type="term" value="F:ATP binding"/>
    <property type="evidence" value="ECO:0007669"/>
    <property type="project" value="UniProtKB-UniRule"/>
</dbReference>
<dbReference type="GO" id="GO:0004821">
    <property type="term" value="F:histidine-tRNA ligase activity"/>
    <property type="evidence" value="ECO:0007669"/>
    <property type="project" value="UniProtKB-UniRule"/>
</dbReference>
<dbReference type="GO" id="GO:0006427">
    <property type="term" value="P:histidyl-tRNA aminoacylation"/>
    <property type="evidence" value="ECO:0007669"/>
    <property type="project" value="UniProtKB-UniRule"/>
</dbReference>
<dbReference type="CDD" id="cd00773">
    <property type="entry name" value="HisRS-like_core"/>
    <property type="match status" value="1"/>
</dbReference>
<dbReference type="Gene3D" id="3.40.50.800">
    <property type="entry name" value="Anticodon-binding domain"/>
    <property type="match status" value="1"/>
</dbReference>
<dbReference type="Gene3D" id="3.30.930.10">
    <property type="entry name" value="Bira Bifunctional Protein, Domain 2"/>
    <property type="match status" value="1"/>
</dbReference>
<dbReference type="HAMAP" id="MF_00127">
    <property type="entry name" value="His_tRNA_synth"/>
    <property type="match status" value="1"/>
</dbReference>
<dbReference type="InterPro" id="IPR006195">
    <property type="entry name" value="aa-tRNA-synth_II"/>
</dbReference>
<dbReference type="InterPro" id="IPR045864">
    <property type="entry name" value="aa-tRNA-synth_II/BPL/LPL"/>
</dbReference>
<dbReference type="InterPro" id="IPR004154">
    <property type="entry name" value="Anticodon-bd"/>
</dbReference>
<dbReference type="InterPro" id="IPR036621">
    <property type="entry name" value="Anticodon-bd_dom_sf"/>
</dbReference>
<dbReference type="InterPro" id="IPR015807">
    <property type="entry name" value="His-tRNA-ligase"/>
</dbReference>
<dbReference type="InterPro" id="IPR041715">
    <property type="entry name" value="HisRS-like_core"/>
</dbReference>
<dbReference type="InterPro" id="IPR004516">
    <property type="entry name" value="HisRS/HisZ"/>
</dbReference>
<dbReference type="NCBIfam" id="TIGR00442">
    <property type="entry name" value="hisS"/>
    <property type="match status" value="1"/>
</dbReference>
<dbReference type="PANTHER" id="PTHR43707:SF1">
    <property type="entry name" value="HISTIDINE--TRNA LIGASE, MITOCHONDRIAL-RELATED"/>
    <property type="match status" value="1"/>
</dbReference>
<dbReference type="PANTHER" id="PTHR43707">
    <property type="entry name" value="HISTIDYL-TRNA SYNTHETASE"/>
    <property type="match status" value="1"/>
</dbReference>
<dbReference type="Pfam" id="PF03129">
    <property type="entry name" value="HGTP_anticodon"/>
    <property type="match status" value="1"/>
</dbReference>
<dbReference type="Pfam" id="PF13393">
    <property type="entry name" value="tRNA-synt_His"/>
    <property type="match status" value="1"/>
</dbReference>
<dbReference type="PIRSF" id="PIRSF001549">
    <property type="entry name" value="His-tRNA_synth"/>
    <property type="match status" value="1"/>
</dbReference>
<dbReference type="SUPFAM" id="SSF52954">
    <property type="entry name" value="Class II aaRS ABD-related"/>
    <property type="match status" value="1"/>
</dbReference>
<dbReference type="SUPFAM" id="SSF55681">
    <property type="entry name" value="Class II aaRS and biotin synthetases"/>
    <property type="match status" value="1"/>
</dbReference>
<dbReference type="PROSITE" id="PS50862">
    <property type="entry name" value="AA_TRNA_LIGASE_II"/>
    <property type="match status" value="1"/>
</dbReference>